<feature type="chain" id="PRO_0000254543" description="Transmembrane protein 107">
    <location>
        <begin position="1"/>
        <end position="140"/>
    </location>
</feature>
<feature type="transmembrane region" description="Helical" evidence="2">
    <location>
        <begin position="7"/>
        <end position="27"/>
    </location>
</feature>
<feature type="transmembrane region" description="Helical" evidence="2">
    <location>
        <begin position="53"/>
        <end position="73"/>
    </location>
</feature>
<feature type="transmembrane region" description="Helical" evidence="2">
    <location>
        <begin position="84"/>
        <end position="104"/>
    </location>
</feature>
<feature type="transmembrane region" description="Helical" evidence="2">
    <location>
        <begin position="113"/>
        <end position="133"/>
    </location>
</feature>
<feature type="glycosylation site" description="N-linked (GlcNAc...) asparagine" evidence="2">
    <location>
        <position position="79"/>
    </location>
</feature>
<keyword id="KW-0970">Cilium biogenesis/degradation</keyword>
<keyword id="KW-0217">Developmental protein</keyword>
<keyword id="KW-0325">Glycoprotein</keyword>
<keyword id="KW-0472">Membrane</keyword>
<keyword id="KW-1185">Reference proteome</keyword>
<keyword id="KW-0812">Transmembrane</keyword>
<keyword id="KW-1133">Transmembrane helix</keyword>
<comment type="function">
    <text evidence="1">May play a role in cilia formation and embryonic patterning.</text>
</comment>
<comment type="subcellular location">
    <subcellularLocation>
        <location evidence="3">Membrane</location>
        <topology evidence="3">Multi-pass membrane protein</topology>
    </subcellularLocation>
</comment>
<protein>
    <recommendedName>
        <fullName>Transmembrane protein 107</fullName>
    </recommendedName>
</protein>
<proteinExistence type="evidence at transcript level"/>
<gene>
    <name type="primary">tmem107</name>
</gene>
<sequence length="140" mass="15561">MSAISSLVPSRFLTLTAHLVIVITIFWSRENNVLACLPINFTPQQFSSRDTELIIALSVTLGLFAVEYAGFLSGVSMFNKTQSLLSVGAHASATVSLLFFLFEGWDCSLYWWIMSFCSALPAVTEIIIFIAVFGWKRKPL</sequence>
<name>TM107_XENLA</name>
<reference key="1">
    <citation type="submission" date="2005-10" db="EMBL/GenBank/DDBJ databases">
        <authorList>
            <consortium name="NIH - Xenopus Gene Collection (XGC) project"/>
        </authorList>
    </citation>
    <scope>NUCLEOTIDE SEQUENCE [LARGE SCALE MRNA]</scope>
    <source>
        <tissue>Testis</tissue>
    </source>
</reference>
<organism>
    <name type="scientific">Xenopus laevis</name>
    <name type="common">African clawed frog</name>
    <dbReference type="NCBI Taxonomy" id="8355"/>
    <lineage>
        <taxon>Eukaryota</taxon>
        <taxon>Metazoa</taxon>
        <taxon>Chordata</taxon>
        <taxon>Craniata</taxon>
        <taxon>Vertebrata</taxon>
        <taxon>Euteleostomi</taxon>
        <taxon>Amphibia</taxon>
        <taxon>Batrachia</taxon>
        <taxon>Anura</taxon>
        <taxon>Pipoidea</taxon>
        <taxon>Pipidae</taxon>
        <taxon>Xenopodinae</taxon>
        <taxon>Xenopus</taxon>
        <taxon>Xenopus</taxon>
    </lineage>
</organism>
<accession>Q3B8H0</accession>
<dbReference type="EMBL" id="BC106440">
    <property type="protein sequence ID" value="AAI06441.1"/>
    <property type="molecule type" value="mRNA"/>
</dbReference>
<dbReference type="RefSeq" id="NP_001090108.1">
    <property type="nucleotide sequence ID" value="NM_001096639.1"/>
</dbReference>
<dbReference type="RefSeq" id="XP_018109276.1">
    <property type="nucleotide sequence ID" value="XM_018253787.1"/>
</dbReference>
<dbReference type="GlyCosmos" id="Q3B8H0">
    <property type="glycosylation" value="1 site, No reported glycans"/>
</dbReference>
<dbReference type="DNASU" id="735183"/>
<dbReference type="GeneID" id="735183"/>
<dbReference type="KEGG" id="xla:735183"/>
<dbReference type="CTD" id="735183"/>
<dbReference type="OrthoDB" id="2114471at2759"/>
<dbReference type="Proteomes" id="UP000186698">
    <property type="component" value="Chromosome 3L"/>
</dbReference>
<dbReference type="Bgee" id="108711759">
    <property type="expression patterns" value="Expressed in oocyte and 19 other cell types or tissues"/>
</dbReference>
<dbReference type="GO" id="GO:0016020">
    <property type="term" value="C:membrane"/>
    <property type="evidence" value="ECO:0007669"/>
    <property type="project" value="UniProtKB-SubCell"/>
</dbReference>
<dbReference type="GO" id="GO:0036038">
    <property type="term" value="C:MKS complex"/>
    <property type="evidence" value="ECO:0000318"/>
    <property type="project" value="GO_Central"/>
</dbReference>
<dbReference type="GO" id="GO:1905515">
    <property type="term" value="P:non-motile cilium assembly"/>
    <property type="evidence" value="ECO:0000318"/>
    <property type="project" value="GO_Central"/>
</dbReference>
<dbReference type="GO" id="GO:1904491">
    <property type="term" value="P:protein localization to ciliary transition zone"/>
    <property type="evidence" value="ECO:0000318"/>
    <property type="project" value="GO_Central"/>
</dbReference>
<dbReference type="InterPro" id="IPR029248">
    <property type="entry name" value="TMEM107"/>
</dbReference>
<dbReference type="PANTHER" id="PTHR34341">
    <property type="entry name" value="TRANSMEMBRANE PROTEIN 107"/>
    <property type="match status" value="1"/>
</dbReference>
<dbReference type="PANTHER" id="PTHR34341:SF1">
    <property type="entry name" value="TRANSMEMBRANE PROTEIN 107"/>
    <property type="match status" value="1"/>
</dbReference>
<dbReference type="Pfam" id="PF14995">
    <property type="entry name" value="TMEM107"/>
    <property type="match status" value="1"/>
</dbReference>
<evidence type="ECO:0000250" key="1"/>
<evidence type="ECO:0000255" key="2"/>
<evidence type="ECO:0000305" key="3"/>